<evidence type="ECO:0000250" key="1"/>
<evidence type="ECO:0000255" key="2"/>
<evidence type="ECO:0000305" key="3"/>
<organism>
    <name type="scientific">Oryza sativa subsp. japonica</name>
    <name type="common">Rice</name>
    <dbReference type="NCBI Taxonomy" id="39947"/>
    <lineage>
        <taxon>Eukaryota</taxon>
        <taxon>Viridiplantae</taxon>
        <taxon>Streptophyta</taxon>
        <taxon>Embryophyta</taxon>
        <taxon>Tracheophyta</taxon>
        <taxon>Spermatophyta</taxon>
        <taxon>Magnoliopsida</taxon>
        <taxon>Liliopsida</taxon>
        <taxon>Poales</taxon>
        <taxon>Poaceae</taxon>
        <taxon>BOP clade</taxon>
        <taxon>Oryzoideae</taxon>
        <taxon>Oryzeae</taxon>
        <taxon>Oryzinae</taxon>
        <taxon>Oryza</taxon>
        <taxon>Oryza sativa</taxon>
    </lineage>
</organism>
<sequence length="426" mass="46420">MAAPLFLLLLLLLVSSASAGYEEEALLRRAEEERDWMVGVRRRIHAHPELAFREHHTSALVRDELERLGLTARAVAGTGVVADVGSGLPPVVALRADMDALPVQELVEWEHKSKVDGVMHACGHDVHTAMLLGAAKLLSERKEQIKGTVRLLFQPAEEGGAGASYMIKDGVLDGVEAIFGMHVDYRMPTGVIAAHAGPTQAAVCFYEAKIEGKTGKAETPHLNVDPIVAASFVILSLQQLISREDDPLHSQVLSVTYVKGGNTIDATPPVIEFGGTLRSLTTEGLYRLQKRVKEVVEGQAAVHRCKGVVQIKRDDYPMYPAVFNDEKLHHHVETVGRRLLGPDKVKPGEKIMAGEDFAFYQQLVPGVMFGIGIRNGEVGSVHTVHNPKFFVDEDVIPIGAALHTALAEMYLTERSTEGEDGSQHSH</sequence>
<name>ILL5_ORYSJ</name>
<reference key="1">
    <citation type="journal article" date="2002" name="Nature">
        <title>Sequence and analysis of rice chromosome 4.</title>
        <authorList>
            <person name="Feng Q."/>
            <person name="Zhang Y."/>
            <person name="Hao P."/>
            <person name="Wang S."/>
            <person name="Fu G."/>
            <person name="Huang Y."/>
            <person name="Li Y."/>
            <person name="Zhu J."/>
            <person name="Liu Y."/>
            <person name="Hu X."/>
            <person name="Jia P."/>
            <person name="Zhang Y."/>
            <person name="Zhao Q."/>
            <person name="Ying K."/>
            <person name="Yu S."/>
            <person name="Tang Y."/>
            <person name="Weng Q."/>
            <person name="Zhang L."/>
            <person name="Lu Y."/>
            <person name="Mu J."/>
            <person name="Lu Y."/>
            <person name="Zhang L.S."/>
            <person name="Yu Z."/>
            <person name="Fan D."/>
            <person name="Liu X."/>
            <person name="Lu T."/>
            <person name="Li C."/>
            <person name="Wu Y."/>
            <person name="Sun T."/>
            <person name="Lei H."/>
            <person name="Li T."/>
            <person name="Hu H."/>
            <person name="Guan J."/>
            <person name="Wu M."/>
            <person name="Zhang R."/>
            <person name="Zhou B."/>
            <person name="Chen Z."/>
            <person name="Chen L."/>
            <person name="Jin Z."/>
            <person name="Wang R."/>
            <person name="Yin H."/>
            <person name="Cai Z."/>
            <person name="Ren S."/>
            <person name="Lv G."/>
            <person name="Gu W."/>
            <person name="Zhu G."/>
            <person name="Tu Y."/>
            <person name="Jia J."/>
            <person name="Zhang Y."/>
            <person name="Chen J."/>
            <person name="Kang H."/>
            <person name="Chen X."/>
            <person name="Shao C."/>
            <person name="Sun Y."/>
            <person name="Hu Q."/>
            <person name="Zhang X."/>
            <person name="Zhang W."/>
            <person name="Wang L."/>
            <person name="Ding C."/>
            <person name="Sheng H."/>
            <person name="Gu J."/>
            <person name="Chen S."/>
            <person name="Ni L."/>
            <person name="Zhu F."/>
            <person name="Chen W."/>
            <person name="Lan L."/>
            <person name="Lai Y."/>
            <person name="Cheng Z."/>
            <person name="Gu M."/>
            <person name="Jiang J."/>
            <person name="Li J."/>
            <person name="Hong G."/>
            <person name="Xue Y."/>
            <person name="Han B."/>
        </authorList>
    </citation>
    <scope>NUCLEOTIDE SEQUENCE [LARGE SCALE GENOMIC DNA]</scope>
    <source>
        <strain>cv. Nipponbare</strain>
    </source>
</reference>
<reference key="2">
    <citation type="journal article" date="2005" name="Nature">
        <title>The map-based sequence of the rice genome.</title>
        <authorList>
            <consortium name="International rice genome sequencing project (IRGSP)"/>
        </authorList>
    </citation>
    <scope>NUCLEOTIDE SEQUENCE [LARGE SCALE GENOMIC DNA]</scope>
    <source>
        <strain>cv. Nipponbare</strain>
    </source>
</reference>
<reference key="3">
    <citation type="journal article" date="2008" name="Nucleic Acids Res.">
        <title>The rice annotation project database (RAP-DB): 2008 update.</title>
        <authorList>
            <consortium name="The rice annotation project (RAP)"/>
        </authorList>
    </citation>
    <scope>GENOME REANNOTATION</scope>
    <source>
        <strain>cv. Nipponbare</strain>
    </source>
</reference>
<reference key="4">
    <citation type="journal article" date="2013" name="Rice">
        <title>Improvement of the Oryza sativa Nipponbare reference genome using next generation sequence and optical map data.</title>
        <authorList>
            <person name="Kawahara Y."/>
            <person name="de la Bastide M."/>
            <person name="Hamilton J.P."/>
            <person name="Kanamori H."/>
            <person name="McCombie W.R."/>
            <person name="Ouyang S."/>
            <person name="Schwartz D.C."/>
            <person name="Tanaka T."/>
            <person name="Wu J."/>
            <person name="Zhou S."/>
            <person name="Childs K.L."/>
            <person name="Davidson R.M."/>
            <person name="Lin H."/>
            <person name="Quesada-Ocampo L."/>
            <person name="Vaillancourt B."/>
            <person name="Sakai H."/>
            <person name="Lee S.S."/>
            <person name="Kim J."/>
            <person name="Numa H."/>
            <person name="Itoh T."/>
            <person name="Buell C.R."/>
            <person name="Matsumoto T."/>
        </authorList>
    </citation>
    <scope>GENOME REANNOTATION</scope>
    <source>
        <strain>cv. Nipponbare</strain>
    </source>
</reference>
<reference key="5">
    <citation type="journal article" date="2003" name="Science">
        <title>Collection, mapping, and annotation of over 28,000 cDNA clones from japonica rice.</title>
        <authorList>
            <consortium name="The rice full-length cDNA consortium"/>
        </authorList>
    </citation>
    <scope>NUCLEOTIDE SEQUENCE [LARGE SCALE MRNA]</scope>
    <source>
        <strain>cv. Nipponbare</strain>
    </source>
</reference>
<accession>Q7XUA8</accession>
<accession>B7ETU4</accession>
<gene>
    <name type="primary">ILL5</name>
    <name type="ordered locus">Os04g0521800</name>
    <name type="ordered locus">LOC_Os04g44110</name>
    <name type="ORF">OSJNBa0019D11.19</name>
</gene>
<dbReference type="EC" id="3.5.1.-"/>
<dbReference type="EMBL" id="AL662958">
    <property type="protein sequence ID" value="CAD41438.1"/>
    <property type="molecule type" value="Genomic_DNA"/>
</dbReference>
<dbReference type="EMBL" id="AP008210">
    <property type="protein sequence ID" value="BAF15253.1"/>
    <property type="molecule type" value="Genomic_DNA"/>
</dbReference>
<dbReference type="EMBL" id="AP014960">
    <property type="protein sequence ID" value="BAS90129.1"/>
    <property type="molecule type" value="Genomic_DNA"/>
</dbReference>
<dbReference type="EMBL" id="AK102934">
    <property type="protein sequence ID" value="BAG95791.1"/>
    <property type="molecule type" value="mRNA"/>
</dbReference>
<dbReference type="RefSeq" id="XP_015636371.1">
    <property type="nucleotide sequence ID" value="XM_015780885.1"/>
</dbReference>
<dbReference type="SMR" id="Q7XUA8"/>
<dbReference type="FunCoup" id="Q7XUA8">
    <property type="interactions" value="628"/>
</dbReference>
<dbReference type="STRING" id="39947.Q7XUA8"/>
<dbReference type="MEROPS" id="M20.A06"/>
<dbReference type="PaxDb" id="39947-Q7XUA8"/>
<dbReference type="EnsemblPlants" id="Os04t0521800-01">
    <property type="protein sequence ID" value="Os04t0521800-01"/>
    <property type="gene ID" value="Os04g0521800"/>
</dbReference>
<dbReference type="Gramene" id="Os04t0521800-01">
    <property type="protein sequence ID" value="Os04t0521800-01"/>
    <property type="gene ID" value="Os04g0521800"/>
</dbReference>
<dbReference type="KEGG" id="dosa:Os04g0521800"/>
<dbReference type="eggNOG" id="ENOG502QQEM">
    <property type="taxonomic scope" value="Eukaryota"/>
</dbReference>
<dbReference type="HOGENOM" id="CLU_023257_0_0_1"/>
<dbReference type="InParanoid" id="Q7XUA8"/>
<dbReference type="OMA" id="ITSACDR"/>
<dbReference type="OrthoDB" id="6119954at2759"/>
<dbReference type="PlantReactome" id="R-OSA-1119580">
    <property type="pathway name" value="IAA biosynthesis II"/>
</dbReference>
<dbReference type="Proteomes" id="UP000000763">
    <property type="component" value="Chromosome 4"/>
</dbReference>
<dbReference type="Proteomes" id="UP000059680">
    <property type="component" value="Chromosome 4"/>
</dbReference>
<dbReference type="ExpressionAtlas" id="Q7XUA8">
    <property type="expression patterns" value="baseline and differential"/>
</dbReference>
<dbReference type="GO" id="GO:0016787">
    <property type="term" value="F:hydrolase activity"/>
    <property type="evidence" value="ECO:0000318"/>
    <property type="project" value="GO_Central"/>
</dbReference>
<dbReference type="GO" id="GO:0009850">
    <property type="term" value="P:auxin metabolic process"/>
    <property type="evidence" value="ECO:0007669"/>
    <property type="project" value="InterPro"/>
</dbReference>
<dbReference type="CDD" id="cd08017">
    <property type="entry name" value="M20_IAA_Hyd"/>
    <property type="match status" value="1"/>
</dbReference>
<dbReference type="FunFam" id="3.30.70.360:FF:000001">
    <property type="entry name" value="N-acetyldiaminopimelate deacetylase"/>
    <property type="match status" value="1"/>
</dbReference>
<dbReference type="Gene3D" id="3.30.70.360">
    <property type="match status" value="1"/>
</dbReference>
<dbReference type="Gene3D" id="3.40.630.10">
    <property type="entry name" value="Zn peptidases"/>
    <property type="match status" value="1"/>
</dbReference>
<dbReference type="InterPro" id="IPR017439">
    <property type="entry name" value="Amidohydrolase"/>
</dbReference>
<dbReference type="InterPro" id="IPR036264">
    <property type="entry name" value="Bact_exopeptidase_dim_dom"/>
</dbReference>
<dbReference type="InterPro" id="IPR044757">
    <property type="entry name" value="ILR1-like_Hyd"/>
</dbReference>
<dbReference type="InterPro" id="IPR002933">
    <property type="entry name" value="Peptidase_M20"/>
</dbReference>
<dbReference type="InterPro" id="IPR011650">
    <property type="entry name" value="Peptidase_M20_dimer"/>
</dbReference>
<dbReference type="NCBIfam" id="TIGR01891">
    <property type="entry name" value="amidohydrolases"/>
    <property type="match status" value="1"/>
</dbReference>
<dbReference type="PANTHER" id="PTHR11014:SF140">
    <property type="entry name" value="IAA-AMINO ACID HYDROLASE ILR1-LIKE 3"/>
    <property type="match status" value="1"/>
</dbReference>
<dbReference type="PANTHER" id="PTHR11014">
    <property type="entry name" value="PEPTIDASE M20 FAMILY MEMBER"/>
    <property type="match status" value="1"/>
</dbReference>
<dbReference type="Pfam" id="PF07687">
    <property type="entry name" value="M20_dimer"/>
    <property type="match status" value="1"/>
</dbReference>
<dbReference type="Pfam" id="PF01546">
    <property type="entry name" value="Peptidase_M20"/>
    <property type="match status" value="1"/>
</dbReference>
<dbReference type="PIRSF" id="PIRSF005962">
    <property type="entry name" value="Pept_M20D_amidohydro"/>
    <property type="match status" value="1"/>
</dbReference>
<dbReference type="SUPFAM" id="SSF55031">
    <property type="entry name" value="Bacterial exopeptidase dimerisation domain"/>
    <property type="match status" value="1"/>
</dbReference>
<dbReference type="SUPFAM" id="SSF53187">
    <property type="entry name" value="Zn-dependent exopeptidases"/>
    <property type="match status" value="1"/>
</dbReference>
<feature type="signal peptide" evidence="2">
    <location>
        <begin position="1"/>
        <end position="19"/>
    </location>
</feature>
<feature type="chain" id="PRO_0000351641" description="IAA-amino acid hydrolase ILR1-like 5">
    <location>
        <begin position="20"/>
        <end position="426"/>
    </location>
</feature>
<proteinExistence type="evidence at transcript level"/>
<protein>
    <recommendedName>
        <fullName>IAA-amino acid hydrolase ILR1-like 5</fullName>
        <ecNumber>3.5.1.-</ecNumber>
    </recommendedName>
</protein>
<comment type="function">
    <text evidence="1">Hydrolyzes certain amino acid conjugates of the plant growth regulator indole-3-acetic acid (IAA).</text>
</comment>
<comment type="similarity">
    <text evidence="3">Belongs to the peptidase M20 family.</text>
</comment>
<keyword id="KW-0378">Hydrolase</keyword>
<keyword id="KW-1185">Reference proteome</keyword>
<keyword id="KW-0732">Signal</keyword>